<reference key="1">
    <citation type="journal article" date="2000" name="Science">
        <title>The genome sequence of Drosophila melanogaster.</title>
        <authorList>
            <person name="Adams M.D."/>
            <person name="Celniker S.E."/>
            <person name="Holt R.A."/>
            <person name="Evans C.A."/>
            <person name="Gocayne J.D."/>
            <person name="Amanatides P.G."/>
            <person name="Scherer S.E."/>
            <person name="Li P.W."/>
            <person name="Hoskins R.A."/>
            <person name="Galle R.F."/>
            <person name="George R.A."/>
            <person name="Lewis S.E."/>
            <person name="Richards S."/>
            <person name="Ashburner M."/>
            <person name="Henderson S.N."/>
            <person name="Sutton G.G."/>
            <person name="Wortman J.R."/>
            <person name="Yandell M.D."/>
            <person name="Zhang Q."/>
            <person name="Chen L.X."/>
            <person name="Brandon R.C."/>
            <person name="Rogers Y.-H.C."/>
            <person name="Blazej R.G."/>
            <person name="Champe M."/>
            <person name="Pfeiffer B.D."/>
            <person name="Wan K.H."/>
            <person name="Doyle C."/>
            <person name="Baxter E.G."/>
            <person name="Helt G."/>
            <person name="Nelson C.R."/>
            <person name="Miklos G.L.G."/>
            <person name="Abril J.F."/>
            <person name="Agbayani A."/>
            <person name="An H.-J."/>
            <person name="Andrews-Pfannkoch C."/>
            <person name="Baldwin D."/>
            <person name="Ballew R.M."/>
            <person name="Basu A."/>
            <person name="Baxendale J."/>
            <person name="Bayraktaroglu L."/>
            <person name="Beasley E.M."/>
            <person name="Beeson K.Y."/>
            <person name="Benos P.V."/>
            <person name="Berman B.P."/>
            <person name="Bhandari D."/>
            <person name="Bolshakov S."/>
            <person name="Borkova D."/>
            <person name="Botchan M.R."/>
            <person name="Bouck J."/>
            <person name="Brokstein P."/>
            <person name="Brottier P."/>
            <person name="Burtis K.C."/>
            <person name="Busam D.A."/>
            <person name="Butler H."/>
            <person name="Cadieu E."/>
            <person name="Center A."/>
            <person name="Chandra I."/>
            <person name="Cherry J.M."/>
            <person name="Cawley S."/>
            <person name="Dahlke C."/>
            <person name="Davenport L.B."/>
            <person name="Davies P."/>
            <person name="de Pablos B."/>
            <person name="Delcher A."/>
            <person name="Deng Z."/>
            <person name="Mays A.D."/>
            <person name="Dew I."/>
            <person name="Dietz S.M."/>
            <person name="Dodson K."/>
            <person name="Doup L.E."/>
            <person name="Downes M."/>
            <person name="Dugan-Rocha S."/>
            <person name="Dunkov B.C."/>
            <person name="Dunn P."/>
            <person name="Durbin K.J."/>
            <person name="Evangelista C.C."/>
            <person name="Ferraz C."/>
            <person name="Ferriera S."/>
            <person name="Fleischmann W."/>
            <person name="Fosler C."/>
            <person name="Gabrielian A.E."/>
            <person name="Garg N.S."/>
            <person name="Gelbart W.M."/>
            <person name="Glasser K."/>
            <person name="Glodek A."/>
            <person name="Gong F."/>
            <person name="Gorrell J.H."/>
            <person name="Gu Z."/>
            <person name="Guan P."/>
            <person name="Harris M."/>
            <person name="Harris N.L."/>
            <person name="Harvey D.A."/>
            <person name="Heiman T.J."/>
            <person name="Hernandez J.R."/>
            <person name="Houck J."/>
            <person name="Hostin D."/>
            <person name="Houston K.A."/>
            <person name="Howland T.J."/>
            <person name="Wei M.-H."/>
            <person name="Ibegwam C."/>
            <person name="Jalali M."/>
            <person name="Kalush F."/>
            <person name="Karpen G.H."/>
            <person name="Ke Z."/>
            <person name="Kennison J.A."/>
            <person name="Ketchum K.A."/>
            <person name="Kimmel B.E."/>
            <person name="Kodira C.D."/>
            <person name="Kraft C.L."/>
            <person name="Kravitz S."/>
            <person name="Kulp D."/>
            <person name="Lai Z."/>
            <person name="Lasko P."/>
            <person name="Lei Y."/>
            <person name="Levitsky A.A."/>
            <person name="Li J.H."/>
            <person name="Li Z."/>
            <person name="Liang Y."/>
            <person name="Lin X."/>
            <person name="Liu X."/>
            <person name="Mattei B."/>
            <person name="McIntosh T.C."/>
            <person name="McLeod M.P."/>
            <person name="McPherson D."/>
            <person name="Merkulov G."/>
            <person name="Milshina N.V."/>
            <person name="Mobarry C."/>
            <person name="Morris J."/>
            <person name="Moshrefi A."/>
            <person name="Mount S.M."/>
            <person name="Moy M."/>
            <person name="Murphy B."/>
            <person name="Murphy L."/>
            <person name="Muzny D.M."/>
            <person name="Nelson D.L."/>
            <person name="Nelson D.R."/>
            <person name="Nelson K.A."/>
            <person name="Nixon K."/>
            <person name="Nusskern D.R."/>
            <person name="Pacleb J.M."/>
            <person name="Palazzolo M."/>
            <person name="Pittman G.S."/>
            <person name="Pan S."/>
            <person name="Pollard J."/>
            <person name="Puri V."/>
            <person name="Reese M.G."/>
            <person name="Reinert K."/>
            <person name="Remington K."/>
            <person name="Saunders R.D.C."/>
            <person name="Scheeler F."/>
            <person name="Shen H."/>
            <person name="Shue B.C."/>
            <person name="Siden-Kiamos I."/>
            <person name="Simpson M."/>
            <person name="Skupski M.P."/>
            <person name="Smith T.J."/>
            <person name="Spier E."/>
            <person name="Spradling A.C."/>
            <person name="Stapleton M."/>
            <person name="Strong R."/>
            <person name="Sun E."/>
            <person name="Svirskas R."/>
            <person name="Tector C."/>
            <person name="Turner R."/>
            <person name="Venter E."/>
            <person name="Wang A.H."/>
            <person name="Wang X."/>
            <person name="Wang Z.-Y."/>
            <person name="Wassarman D.A."/>
            <person name="Weinstock G.M."/>
            <person name="Weissenbach J."/>
            <person name="Williams S.M."/>
            <person name="Woodage T."/>
            <person name="Worley K.C."/>
            <person name="Wu D."/>
            <person name="Yang S."/>
            <person name="Yao Q.A."/>
            <person name="Ye J."/>
            <person name="Yeh R.-F."/>
            <person name="Zaveri J.S."/>
            <person name="Zhan M."/>
            <person name="Zhang G."/>
            <person name="Zhao Q."/>
            <person name="Zheng L."/>
            <person name="Zheng X.H."/>
            <person name="Zhong F.N."/>
            <person name="Zhong W."/>
            <person name="Zhou X."/>
            <person name="Zhu S.C."/>
            <person name="Zhu X."/>
            <person name="Smith H.O."/>
            <person name="Gibbs R.A."/>
            <person name="Myers E.W."/>
            <person name="Rubin G.M."/>
            <person name="Venter J.C."/>
        </authorList>
    </citation>
    <scope>NUCLEOTIDE SEQUENCE [LARGE SCALE GENOMIC DNA]</scope>
    <source>
        <strain>Berkeley</strain>
    </source>
</reference>
<reference key="2">
    <citation type="journal article" date="2002" name="Genome Biol.">
        <title>Annotation of the Drosophila melanogaster euchromatic genome: a systematic review.</title>
        <authorList>
            <person name="Misra S."/>
            <person name="Crosby M.A."/>
            <person name="Mungall C.J."/>
            <person name="Matthews B.B."/>
            <person name="Campbell K.S."/>
            <person name="Hradecky P."/>
            <person name="Huang Y."/>
            <person name="Kaminker J.S."/>
            <person name="Millburn G.H."/>
            <person name="Prochnik S.E."/>
            <person name="Smith C.D."/>
            <person name="Tupy J.L."/>
            <person name="Whitfield E.J."/>
            <person name="Bayraktaroglu L."/>
            <person name="Berman B.P."/>
            <person name="Bettencourt B.R."/>
            <person name="Celniker S.E."/>
            <person name="de Grey A.D.N.J."/>
            <person name="Drysdale R.A."/>
            <person name="Harris N.L."/>
            <person name="Richter J."/>
            <person name="Russo S."/>
            <person name="Schroeder A.J."/>
            <person name="Shu S.Q."/>
            <person name="Stapleton M."/>
            <person name="Yamada C."/>
            <person name="Ashburner M."/>
            <person name="Gelbart W.M."/>
            <person name="Rubin G.M."/>
            <person name="Lewis S.E."/>
        </authorList>
    </citation>
    <scope>GENOME REANNOTATION</scope>
    <source>
        <strain>Berkeley</strain>
    </source>
</reference>
<reference key="3">
    <citation type="journal article" date="2002" name="Genome Biol.">
        <title>A Drosophila full-length cDNA resource.</title>
        <authorList>
            <person name="Stapleton M."/>
            <person name="Carlson J.W."/>
            <person name="Brokstein P."/>
            <person name="Yu C."/>
            <person name="Champe M."/>
            <person name="George R.A."/>
            <person name="Guarin H."/>
            <person name="Kronmiller B."/>
            <person name="Pacleb J.M."/>
            <person name="Park S."/>
            <person name="Wan K.H."/>
            <person name="Rubin G.M."/>
            <person name="Celniker S.E."/>
        </authorList>
    </citation>
    <scope>NUCLEOTIDE SEQUENCE [LARGE SCALE MRNA]</scope>
    <source>
        <strain>Berkeley</strain>
        <tissue>Embryo</tissue>
    </source>
</reference>
<feature type="chain" id="PRO_0000220515" description="Organic cation transporter-like protein">
    <location>
        <begin position="1"/>
        <end position="567"/>
    </location>
</feature>
<feature type="topological domain" description="Cytoplasmic" evidence="2">
    <location>
        <begin position="1"/>
        <end position="21"/>
    </location>
</feature>
<feature type="transmembrane region" description="Helical; Name=1" evidence="2">
    <location>
        <begin position="22"/>
        <end position="42"/>
    </location>
</feature>
<feature type="topological domain" description="Extracellular" evidence="2">
    <location>
        <begin position="43"/>
        <end position="127"/>
    </location>
</feature>
<feature type="transmembrane region" description="Helical; Name=2" evidence="2">
    <location>
        <begin position="128"/>
        <end position="148"/>
    </location>
</feature>
<feature type="topological domain" description="Cytoplasmic" evidence="2">
    <location>
        <begin position="149"/>
        <end position="158"/>
    </location>
</feature>
<feature type="transmembrane region" description="Helical; Name=3" evidence="2">
    <location>
        <begin position="159"/>
        <end position="179"/>
    </location>
</feature>
<feature type="topological domain" description="Extracellular" evidence="2">
    <location>
        <begin position="180"/>
        <end position="189"/>
    </location>
</feature>
<feature type="transmembrane region" description="Helical; Name=4" evidence="2">
    <location>
        <begin position="190"/>
        <end position="210"/>
    </location>
</feature>
<feature type="topological domain" description="Cytoplasmic" evidence="2">
    <location>
        <begin position="211"/>
        <end position="219"/>
    </location>
</feature>
<feature type="transmembrane region" description="Helical; Name=5" evidence="2">
    <location>
        <begin position="220"/>
        <end position="240"/>
    </location>
</feature>
<feature type="topological domain" description="Extracellular" evidence="2">
    <location>
        <begin position="241"/>
        <end position="244"/>
    </location>
</feature>
<feature type="transmembrane region" description="Helical; Name=6" evidence="2">
    <location>
        <begin position="245"/>
        <end position="265"/>
    </location>
</feature>
<feature type="topological domain" description="Cytoplasmic" evidence="2">
    <location>
        <begin position="266"/>
        <end position="343"/>
    </location>
</feature>
<feature type="transmembrane region" description="Helical; Name=7" evidence="2">
    <location>
        <begin position="344"/>
        <end position="364"/>
    </location>
</feature>
<feature type="topological domain" description="Extracellular" evidence="2">
    <location>
        <begin position="365"/>
        <end position="371"/>
    </location>
</feature>
<feature type="transmembrane region" description="Helical; Name=8" evidence="2">
    <location>
        <begin position="372"/>
        <end position="392"/>
    </location>
</feature>
<feature type="topological domain" description="Cytoplasmic" evidence="2">
    <location>
        <begin position="393"/>
        <end position="400"/>
    </location>
</feature>
<feature type="transmembrane region" description="Helical; Name=9" evidence="2">
    <location>
        <begin position="401"/>
        <end position="421"/>
    </location>
</feature>
<feature type="topological domain" description="Extracellular" evidence="2">
    <location>
        <begin position="422"/>
        <end position="427"/>
    </location>
</feature>
<feature type="transmembrane region" description="Helical; Name=10" evidence="2">
    <location>
        <begin position="428"/>
        <end position="448"/>
    </location>
</feature>
<feature type="topological domain" description="Cytoplasmic" evidence="2">
    <location>
        <begin position="449"/>
        <end position="462"/>
    </location>
</feature>
<feature type="transmembrane region" description="Helical; Name=11" evidence="2">
    <location>
        <begin position="463"/>
        <end position="483"/>
    </location>
</feature>
<feature type="topological domain" description="Extracellular" evidence="2">
    <location>
        <begin position="484"/>
        <end position="489"/>
    </location>
</feature>
<feature type="transmembrane region" description="Helical; Name=12" evidence="2">
    <location>
        <begin position="490"/>
        <end position="510"/>
    </location>
</feature>
<feature type="topological domain" description="Cytoplasmic" evidence="2">
    <location>
        <begin position="511"/>
        <end position="567"/>
    </location>
</feature>
<feature type="region of interest" description="Disordered" evidence="3">
    <location>
        <begin position="304"/>
        <end position="326"/>
    </location>
</feature>
<feature type="region of interest" description="Disordered" evidence="3">
    <location>
        <begin position="546"/>
        <end position="567"/>
    </location>
</feature>
<feature type="compositionally biased region" description="Basic and acidic residues" evidence="3">
    <location>
        <begin position="310"/>
        <end position="320"/>
    </location>
</feature>
<feature type="compositionally biased region" description="Polar residues" evidence="3">
    <location>
        <begin position="555"/>
        <end position="567"/>
    </location>
</feature>
<feature type="glycosylation site" description="N-linked (GlcNAc...) asparagine" evidence="2">
    <location>
        <position position="55"/>
    </location>
</feature>
<feature type="glycosylation site" description="N-linked (GlcNAc...) asparagine" evidence="2">
    <location>
        <position position="67"/>
    </location>
</feature>
<feature type="glycosylation site" description="N-linked (GlcNAc...) asparagine" evidence="2">
    <location>
        <position position="89"/>
    </location>
</feature>
<feature type="glycosylation site" description="N-linked (GlcNAc...) asparagine" evidence="2">
    <location>
        <position position="97"/>
    </location>
</feature>
<feature type="sequence conflict" description="In Ref. 3; AAL29163." evidence="4" ref="3">
    <original>SYD</original>
    <variation>IYE</variation>
    <location>
        <begin position="58"/>
        <end position="60"/>
    </location>
</feature>
<feature type="sequence conflict" description="In Ref. 3; AAL29163." evidence="4" ref="3">
    <original>A</original>
    <variation>T</variation>
    <location>
        <position position="410"/>
    </location>
</feature>
<feature type="sequence conflict" description="In Ref. 3; AAL29163." evidence="4" ref="3">
    <original>L</original>
    <variation>M</variation>
    <location>
        <position position="463"/>
    </location>
</feature>
<dbReference type="EMBL" id="AE014297">
    <property type="protein sequence ID" value="AAF56270.1"/>
    <property type="molecule type" value="Genomic_DNA"/>
</dbReference>
<dbReference type="EMBL" id="AY061615">
    <property type="protein sequence ID" value="AAL29163.1"/>
    <property type="molecule type" value="mRNA"/>
</dbReference>
<dbReference type="RefSeq" id="NP_001262907.1">
    <property type="nucleotide sequence ID" value="NM_001275978.2"/>
</dbReference>
<dbReference type="RefSeq" id="NP_651238.2">
    <property type="nucleotide sequence ID" value="NM_142981.3"/>
</dbReference>
<dbReference type="SMR" id="Q95R48"/>
<dbReference type="BioGRID" id="67818">
    <property type="interactions" value="3"/>
</dbReference>
<dbReference type="IntAct" id="Q95R48">
    <property type="interactions" value="3"/>
</dbReference>
<dbReference type="STRING" id="7227.FBpp0306892"/>
<dbReference type="GlyCosmos" id="Q95R48">
    <property type="glycosylation" value="4 sites, No reported glycans"/>
</dbReference>
<dbReference type="GlyGen" id="Q95R48">
    <property type="glycosylation" value="4 sites"/>
</dbReference>
<dbReference type="PaxDb" id="7227-FBpp0083982"/>
<dbReference type="EnsemblMetazoa" id="FBtr0084598">
    <property type="protein sequence ID" value="FBpp0083982"/>
    <property type="gene ID" value="FBgn0086365"/>
</dbReference>
<dbReference type="EnsemblMetazoa" id="FBtr0334869">
    <property type="protein sequence ID" value="FBpp0306892"/>
    <property type="gene ID" value="FBgn0086365"/>
</dbReference>
<dbReference type="GeneID" id="42890"/>
<dbReference type="KEGG" id="dme:Dmel_CG13610"/>
<dbReference type="AGR" id="FB:FBgn0086365"/>
<dbReference type="CTD" id="42890"/>
<dbReference type="FlyBase" id="FBgn0086365">
    <property type="gene designation" value="Orct2"/>
</dbReference>
<dbReference type="VEuPathDB" id="VectorBase:FBgn0086365"/>
<dbReference type="eggNOG" id="KOG0255">
    <property type="taxonomic scope" value="Eukaryota"/>
</dbReference>
<dbReference type="GeneTree" id="ENSGT00940000167832"/>
<dbReference type="HOGENOM" id="CLU_001265_33_4_1"/>
<dbReference type="InParanoid" id="Q95R48"/>
<dbReference type="OMA" id="SGWRYLM"/>
<dbReference type="OrthoDB" id="3936150at2759"/>
<dbReference type="PhylomeDB" id="Q95R48"/>
<dbReference type="Reactome" id="R-DME-112311">
    <property type="pathway name" value="Neurotransmitter clearance"/>
</dbReference>
<dbReference type="Reactome" id="R-DME-181430">
    <property type="pathway name" value="Norepinephrine Neurotransmitter Release Cycle"/>
</dbReference>
<dbReference type="Reactome" id="R-DME-200425">
    <property type="pathway name" value="Carnitine shuttle"/>
</dbReference>
<dbReference type="Reactome" id="R-DME-2161517">
    <property type="pathway name" value="Abacavir transmembrane transport"/>
</dbReference>
<dbReference type="Reactome" id="R-DME-442660">
    <property type="pathway name" value="Na+/Cl- dependent neurotransmitter transporters"/>
</dbReference>
<dbReference type="Reactome" id="R-DME-549127">
    <property type="pathway name" value="Organic cation transport"/>
</dbReference>
<dbReference type="Reactome" id="R-DME-561048">
    <property type="pathway name" value="Organic anion transport"/>
</dbReference>
<dbReference type="Reactome" id="R-DME-917937">
    <property type="pathway name" value="Iron uptake and transport"/>
</dbReference>
<dbReference type="Reactome" id="R-DME-9749641">
    <property type="pathway name" value="Aspirin ADME"/>
</dbReference>
<dbReference type="Reactome" id="R-DME-9793528">
    <property type="pathway name" value="Ciprofloxacin ADME"/>
</dbReference>
<dbReference type="BioGRID-ORCS" id="42890">
    <property type="hits" value="0 hits in 3 CRISPR screens"/>
</dbReference>
<dbReference type="GenomeRNAi" id="42890"/>
<dbReference type="PRO" id="PR:Q95R48"/>
<dbReference type="Proteomes" id="UP000000803">
    <property type="component" value="Chromosome 3R"/>
</dbReference>
<dbReference type="Bgee" id="FBgn0086365">
    <property type="expression patterns" value="Expressed in distal medullary amacrine neuron Dm11 in insect head and 88 other cell types or tissues"/>
</dbReference>
<dbReference type="ExpressionAtlas" id="Q95R48">
    <property type="expression patterns" value="baseline and differential"/>
</dbReference>
<dbReference type="GO" id="GO:0016020">
    <property type="term" value="C:membrane"/>
    <property type="evidence" value="ECO:0007669"/>
    <property type="project" value="UniProtKB-SubCell"/>
</dbReference>
<dbReference type="GO" id="GO:0015101">
    <property type="term" value="F:organic cation transmembrane transporter activity"/>
    <property type="evidence" value="ECO:0000250"/>
    <property type="project" value="UniProtKB"/>
</dbReference>
<dbReference type="GO" id="GO:0006811">
    <property type="term" value="P:monoatomic ion transport"/>
    <property type="evidence" value="ECO:0007669"/>
    <property type="project" value="UniProtKB-KW"/>
</dbReference>
<dbReference type="GO" id="GO:0015695">
    <property type="term" value="P:organic cation transport"/>
    <property type="evidence" value="ECO:0000250"/>
    <property type="project" value="UniProtKB"/>
</dbReference>
<dbReference type="GO" id="GO:0030307">
    <property type="term" value="P:positive regulation of cell growth"/>
    <property type="evidence" value="ECO:0000315"/>
    <property type="project" value="FlyBase"/>
</dbReference>
<dbReference type="GO" id="GO:0040018">
    <property type="term" value="P:positive regulation of multicellular organism growth"/>
    <property type="evidence" value="ECO:0000315"/>
    <property type="project" value="FlyBase"/>
</dbReference>
<dbReference type="CDD" id="cd17317">
    <property type="entry name" value="MFS_SLC22"/>
    <property type="match status" value="1"/>
</dbReference>
<dbReference type="FunFam" id="1.20.1250.20:FF:000553">
    <property type="entry name" value="Organic cation transporter protein"/>
    <property type="match status" value="1"/>
</dbReference>
<dbReference type="Gene3D" id="1.20.1250.20">
    <property type="entry name" value="MFS general substrate transporter like domains"/>
    <property type="match status" value="1"/>
</dbReference>
<dbReference type="InterPro" id="IPR020846">
    <property type="entry name" value="MFS_dom"/>
</dbReference>
<dbReference type="InterPro" id="IPR005828">
    <property type="entry name" value="MFS_sugar_transport-like"/>
</dbReference>
<dbReference type="InterPro" id="IPR036259">
    <property type="entry name" value="MFS_trans_sf"/>
</dbReference>
<dbReference type="PANTHER" id="PTHR24064">
    <property type="entry name" value="SOLUTE CARRIER FAMILY 22 MEMBER"/>
    <property type="match status" value="1"/>
</dbReference>
<dbReference type="Pfam" id="PF00083">
    <property type="entry name" value="Sugar_tr"/>
    <property type="match status" value="1"/>
</dbReference>
<dbReference type="SUPFAM" id="SSF103473">
    <property type="entry name" value="MFS general substrate transporter"/>
    <property type="match status" value="1"/>
</dbReference>
<dbReference type="PROSITE" id="PS50850">
    <property type="entry name" value="MFS"/>
    <property type="match status" value="1"/>
</dbReference>
<keyword id="KW-0325">Glycoprotein</keyword>
<keyword id="KW-0406">Ion transport</keyword>
<keyword id="KW-0472">Membrane</keyword>
<keyword id="KW-1185">Reference proteome</keyword>
<keyword id="KW-0812">Transmembrane</keyword>
<keyword id="KW-1133">Transmembrane helix</keyword>
<keyword id="KW-0813">Transport</keyword>
<evidence type="ECO:0000250" key="1"/>
<evidence type="ECO:0000255" key="2"/>
<evidence type="ECO:0000256" key="3">
    <source>
        <dbReference type="SAM" id="MobiDB-lite"/>
    </source>
</evidence>
<evidence type="ECO:0000305" key="4"/>
<gene>
    <name type="primary">Orct2</name>
    <name type="ORF">CG13610</name>
</gene>
<sequence length="567" mass="63167">MGYDEAIIHLGDFGRYQKIIYFLICLTSIPVAFHKLAGVFLLAKPDFRCALPFENGSSYDLPTHLWNLSYPENERCSYYDVDYTEEYLNGSIPRSSNETKTCSSYVYDRSKYLNSAVTEWNLVCGRDFMAATSDSLFMLGVLLGSIVFGQLSDKYGRKPILFASLVIQVLFGVLAGVAPEYFTYTFARLMVGATTSGVFLVAYVVAMEMVGPDKRLYAGIFVMMFFSVGFMLTAVFAYFVHDWRWLQIALTLPGLIFMFYYWIIPESARWLLLKGRKDCAIANMQKAARFNKVEISDEALSELLDEGENSEEKAKQKLEDQELDEGPPPSVWDLFCYPNLRRKTLLIFLDWLVTSGVYYGLSWNTSNLGGNVLLNFVISGAVEIPAYIFLLLTLNRWGRRSILCGCLVMAGLSLLATVIIPQRMHTLIVACAMLGKLAITASYGTVYIFSAEQFPTVVRNVALGAASMVARISGMMAPFLNFLATIWKPLPLLICGSLTLVAGLLSLLLPETHNKPMLETIADGERFGKKTKADVYLETGQELRAPEAQPLKGSGETNGSTIANGHK</sequence>
<protein>
    <recommendedName>
        <fullName>Organic cation transporter-like protein</fullName>
    </recommendedName>
</protein>
<comment type="function">
    <text evidence="1">Probably transports organic cations.</text>
</comment>
<comment type="subcellular location">
    <subcellularLocation>
        <location evidence="1">Membrane</location>
        <topology evidence="1">Multi-pass membrane protein</topology>
    </subcellularLocation>
</comment>
<comment type="similarity">
    <text evidence="4">Belongs to the major facilitator (TC 2.A.1) superfamily. Organic cation transporter (TC 2.A.1.19) family.</text>
</comment>
<accession>Q95R48</accession>
<accession>Q9VCA3</accession>
<proteinExistence type="evidence at transcript level"/>
<name>OCTL_DROME</name>
<organism>
    <name type="scientific">Drosophila melanogaster</name>
    <name type="common">Fruit fly</name>
    <dbReference type="NCBI Taxonomy" id="7227"/>
    <lineage>
        <taxon>Eukaryota</taxon>
        <taxon>Metazoa</taxon>
        <taxon>Ecdysozoa</taxon>
        <taxon>Arthropoda</taxon>
        <taxon>Hexapoda</taxon>
        <taxon>Insecta</taxon>
        <taxon>Pterygota</taxon>
        <taxon>Neoptera</taxon>
        <taxon>Endopterygota</taxon>
        <taxon>Diptera</taxon>
        <taxon>Brachycera</taxon>
        <taxon>Muscomorpha</taxon>
        <taxon>Ephydroidea</taxon>
        <taxon>Drosophilidae</taxon>
        <taxon>Drosophila</taxon>
        <taxon>Sophophora</taxon>
    </lineage>
</organism>